<evidence type="ECO:0000255" key="1"/>
<evidence type="ECO:0000256" key="2">
    <source>
        <dbReference type="SAM" id="MobiDB-lite"/>
    </source>
</evidence>
<evidence type="ECO:0000269" key="3">
    <source>
    </source>
</evidence>
<evidence type="ECO:0000269" key="4">
    <source>
    </source>
</evidence>
<evidence type="ECO:0000303" key="5">
    <source>
    </source>
</evidence>
<evidence type="ECO:0000305" key="6"/>
<evidence type="ECO:0007744" key="7">
    <source>
    </source>
</evidence>
<evidence type="ECO:0007744" key="8">
    <source>
    </source>
</evidence>
<sequence>MAAVLESLLREEVSVAAVVRWIARSTQGSEDNAGEAAALSSLRALRKEFVPFLLNFLREQSSRVLPQGPPTPAKTPGASAALPGRPGGPPRGSRGARSQLFPPTEAQSTAAEAPLARRGGRRRGPGPARERGGRGLEEGVSGESLPGAGGRRLRGSGSPSRPSLTLSDPPNLSNLEEFPPVGSVPPGPTGTKPSRRINPTPVSEERSLSKPKTCFTSPPISCVPSSQPSALDTSPWGLGLPPGCRSLQEEREMLRKERSKQLQQSPTPTCPTPELGSPLPSRTGSLTDEPADPARVSSRQRLELVALVYSSCIAENLVPNLFLELFFVFQLLTARRMVTAKDSDPELSPAVLDSLESPLFQSIHDCVFFAVQVLECHFQVLSNLDKGTLKLLAENERLLCFSPALQGRLRAAYEGSVAKVSLVMPPSTQAVSFQPETDNRANFSSDRAFHTFKKQRDVFYEVLREWEDHHEEPGWDFEKGLGSRIRAMMGQLSAACSHSHFVRLFQKQLLQMCQSPGGAGGTVLGEAPDVLSMLGADKLGRLWRLQERLMAPQSSGGPCPPPTFPGCQGFFRDFILSASSFQFNQHLMDSLSLKIQELNGLALPQHEPNDEDGESDVDWQGERKQFAVVLLSLRLLAKFLGFVAFLPYRGPEPPPTGELQDSILALRSQVPPVLDVRTLLQRGLQARRAVLTVPWLVEFLSFADHVVPLLEYYRDIFTLLLRLHRSLVLSQESEGKMCFLNKLLLLAVLGWLFQIPTVPEDLFFLEEGPSYAFEVDTVAPEHGLDNAPVVDQQLLYTCCPYIGELRKLLASWVSGSSGRSGGFMRKITPTTTTSLGAQPSQTSQGLQAQLAQAFFHNQPPSLRRTVEFVAERIGSNCVKHIKATLVADLVRQAESLLQEQLVTQGEEGGDPAQLLEILCSQLCPHGAQALALGREFCQRKSPGAVRALLPEETPAAVLSSAENIAVGLATEKACAWLSANITALIRREVKAAVSRTLRAQGPEPAARGERRGCSRACEHHAPLPSHLISEIKDVLSLAVGPRDPDEGVSPEHLEQLLGQLGQTLRCRQFLCPPAEQHLAKCSVELASLLVADQIPILGPPAQYRLERGQARRLLHMLLSLWKEDFQGPVPLQLLLSPRNVGLLADTRPREWDLLLFLLRELVEKGLMGRMEIEACLGSLHQAQWPGDFAEELATLSNLFLAEPHLPEPQLRACELVQPNRGTVLAQS</sequence>
<proteinExistence type="evidence at protein level"/>
<gene>
    <name type="primary">CDAN1</name>
    <name type="ORF">UNQ664/PRO1295</name>
</gene>
<organism>
    <name type="scientific">Homo sapiens</name>
    <name type="common">Human</name>
    <dbReference type="NCBI Taxonomy" id="9606"/>
    <lineage>
        <taxon>Eukaryota</taxon>
        <taxon>Metazoa</taxon>
        <taxon>Chordata</taxon>
        <taxon>Craniata</taxon>
        <taxon>Vertebrata</taxon>
        <taxon>Euteleostomi</taxon>
        <taxon>Mammalia</taxon>
        <taxon>Eutheria</taxon>
        <taxon>Euarchontoglires</taxon>
        <taxon>Primates</taxon>
        <taxon>Haplorrhini</taxon>
        <taxon>Catarrhini</taxon>
        <taxon>Hominidae</taxon>
        <taxon>Homo</taxon>
    </lineage>
</organism>
<comment type="function">
    <text evidence="4">May act as a negative regulator of ASF1 in chromatin assembly.</text>
</comment>
<comment type="subunit">
    <text evidence="4">Found in a cytosolic complex with ASF1A, ASF1B, IPO4 and histones H3.1 and H4.</text>
</comment>
<comment type="subcellular location">
    <subcellularLocation>
        <location>Cytoplasm</location>
    </subcellularLocation>
    <subcellularLocation>
        <location>Nucleus</location>
    </subcellularLocation>
    <subcellularLocation>
        <location evidence="6">Membrane</location>
        <topology evidence="6">Multi-pass membrane protein</topology>
    </subcellularLocation>
    <text>Mainly detected as a cytoplasmic protein.</text>
</comment>
<comment type="alternative products">
    <event type="alternative splicing"/>
    <isoform>
        <id>Q8IWY9-2</id>
        <name>2</name>
        <sequence type="displayed"/>
    </isoform>
    <isoform>
        <id>Q8IWY9-1</id>
        <name>1</name>
        <sequence type="described" ref="VSP_027097 VSP_027098"/>
    </isoform>
    <isoform>
        <id>Q8IWY9-3</id>
        <name>3</name>
        <sequence type="not described"/>
    </isoform>
</comment>
<comment type="tissue specificity">
    <text evidence="3">Ubiquitously expressed. Isoform 3 is not found in erythroid cells.</text>
</comment>
<comment type="disease" evidence="3">
    <disease id="DI-01400">
        <name>Anemia, congenital dyserythropoietic, 1A</name>
        <acronym>CDAN1A</acronym>
        <description>An autosomal recessive blood disorder characterized by morphological abnormalities of erythroblasts, ineffective erythropoiesis, macrocytic anemia and secondary hemochromatosis. It is occasionally associated with bone abnormalities, especially of the hands and feet (acrodysostosis), nail hypoplasia, and scoliosis. Ultrastructural features include internuclear chromatin bridges connecting some nearly completely separated erythroblasts and an abnormal appearance (spongy or Swiss-cheese appearance) of the heterochromatin in a high proportion of the erythroblasts.</description>
        <dbReference type="MIM" id="224120"/>
    </disease>
    <text>The disease is caused by variants affecting the gene represented in this entry.</text>
</comment>
<comment type="sequence caution" evidence="6">
    <conflict type="erroneous initiation">
        <sequence resource="EMBL-CDS" id="AAH52568"/>
    </conflict>
    <text>Extended N-terminus.</text>
</comment>
<comment type="sequence caution" evidence="6">
    <conflict type="erroneous initiation">
        <sequence resource="EMBL-CDS" id="AAO14994"/>
    </conflict>
    <text>Extended N-terminus.</text>
</comment>
<comment type="sequence caution" evidence="6">
    <conflict type="erroneous initiation">
        <sequence resource="EMBL-CDS" id="AAQ88832"/>
    </conflict>
    <text>Truncated N-terminus.</text>
</comment>
<dbReference type="EMBL" id="AF525398">
    <property type="protein sequence ID" value="AAO14994.1"/>
    <property type="status" value="ALT_INIT"/>
    <property type="molecule type" value="mRNA"/>
</dbReference>
<dbReference type="EMBL" id="AC090510">
    <property type="status" value="NOT_ANNOTATED_CDS"/>
    <property type="molecule type" value="Genomic_DNA"/>
</dbReference>
<dbReference type="EMBL" id="BC001092">
    <property type="protein sequence ID" value="AAH01092.1"/>
    <property type="molecule type" value="mRNA"/>
</dbReference>
<dbReference type="EMBL" id="BC008333">
    <property type="protein sequence ID" value="AAH08333.1"/>
    <property type="molecule type" value="mRNA"/>
</dbReference>
<dbReference type="EMBL" id="BC008334">
    <property type="protein sequence ID" value="AAH08334.1"/>
    <property type="molecule type" value="mRNA"/>
</dbReference>
<dbReference type="EMBL" id="BC052568">
    <property type="protein sequence ID" value="AAH52568.1"/>
    <property type="status" value="ALT_INIT"/>
    <property type="molecule type" value="mRNA"/>
</dbReference>
<dbReference type="EMBL" id="BC066640">
    <property type="protein sequence ID" value="AAH66640.1"/>
    <property type="molecule type" value="mRNA"/>
</dbReference>
<dbReference type="EMBL" id="AY358467">
    <property type="protein sequence ID" value="AAQ88832.1"/>
    <property type="status" value="ALT_INIT"/>
    <property type="molecule type" value="mRNA"/>
</dbReference>
<dbReference type="CCDS" id="CCDS32209.1">
    <molecule id="Q8IWY9-2"/>
</dbReference>
<dbReference type="RefSeq" id="NP_612486.2">
    <molecule id="Q8IWY9-2"/>
    <property type="nucleotide sequence ID" value="NM_138477.4"/>
</dbReference>
<dbReference type="SASBDB" id="Q8IWY9"/>
<dbReference type="BioGRID" id="126963">
    <property type="interactions" value="33"/>
</dbReference>
<dbReference type="CORUM" id="Q8IWY9"/>
<dbReference type="DIP" id="DIP-24225N"/>
<dbReference type="FunCoup" id="Q8IWY9">
    <property type="interactions" value="3437"/>
</dbReference>
<dbReference type="IntAct" id="Q8IWY9">
    <property type="interactions" value="6"/>
</dbReference>
<dbReference type="MINT" id="Q8IWY9"/>
<dbReference type="STRING" id="9606.ENSP00000348564"/>
<dbReference type="GlyGen" id="Q8IWY9">
    <property type="glycosylation" value="5 sites, 1 O-linked glycan (1 site)"/>
</dbReference>
<dbReference type="iPTMnet" id="Q8IWY9"/>
<dbReference type="PhosphoSitePlus" id="Q8IWY9"/>
<dbReference type="BioMuta" id="CDAN1"/>
<dbReference type="DMDM" id="296439465"/>
<dbReference type="jPOST" id="Q8IWY9"/>
<dbReference type="MassIVE" id="Q8IWY9"/>
<dbReference type="PaxDb" id="9606-ENSP00000348564"/>
<dbReference type="PeptideAtlas" id="Q8IWY9"/>
<dbReference type="ProteomicsDB" id="70932">
    <molecule id="Q8IWY9-2"/>
</dbReference>
<dbReference type="ProteomicsDB" id="70933">
    <molecule id="Q8IWY9-1"/>
</dbReference>
<dbReference type="Pumba" id="Q8IWY9"/>
<dbReference type="ABCD" id="Q8IWY9">
    <property type="antibodies" value="1 sequenced antibody"/>
</dbReference>
<dbReference type="Antibodypedia" id="42152">
    <property type="antibodies" value="131 antibodies from 19 providers"/>
</dbReference>
<dbReference type="DNASU" id="146059"/>
<dbReference type="Ensembl" id="ENST00000356231.4">
    <molecule id="Q8IWY9-2"/>
    <property type="protein sequence ID" value="ENSP00000348564.3"/>
    <property type="gene ID" value="ENSG00000140326.13"/>
</dbReference>
<dbReference type="GeneID" id="146059"/>
<dbReference type="KEGG" id="hsa:146059"/>
<dbReference type="MANE-Select" id="ENST00000356231.4">
    <property type="protein sequence ID" value="ENSP00000348564.3"/>
    <property type="RefSeq nucleotide sequence ID" value="NM_138477.4"/>
    <property type="RefSeq protein sequence ID" value="NP_612486.2"/>
</dbReference>
<dbReference type="UCSC" id="uc001zql.4">
    <molecule id="Q8IWY9-2"/>
    <property type="organism name" value="human"/>
</dbReference>
<dbReference type="AGR" id="HGNC:1713"/>
<dbReference type="CTD" id="146059"/>
<dbReference type="DisGeNET" id="146059"/>
<dbReference type="GeneCards" id="CDAN1"/>
<dbReference type="GeneReviews" id="CDAN1"/>
<dbReference type="HGNC" id="HGNC:1713">
    <property type="gene designation" value="CDAN1"/>
</dbReference>
<dbReference type="HPA" id="ENSG00000140326">
    <property type="expression patterns" value="Low tissue specificity"/>
</dbReference>
<dbReference type="MalaCards" id="CDAN1"/>
<dbReference type="MIM" id="224120">
    <property type="type" value="phenotype"/>
</dbReference>
<dbReference type="MIM" id="607465">
    <property type="type" value="gene"/>
</dbReference>
<dbReference type="neXtProt" id="NX_Q8IWY9"/>
<dbReference type="OpenTargets" id="ENSG00000140326"/>
<dbReference type="Orphanet" id="98869">
    <property type="disease" value="Congenital dyserythropoietic anemia type I"/>
</dbReference>
<dbReference type="PharmGKB" id="PA26249"/>
<dbReference type="VEuPathDB" id="HostDB:ENSG00000140326"/>
<dbReference type="eggNOG" id="ENOG502QPWR">
    <property type="taxonomic scope" value="Eukaryota"/>
</dbReference>
<dbReference type="GeneTree" id="ENSGT00390000000491"/>
<dbReference type="HOGENOM" id="CLU_007378_0_0_1"/>
<dbReference type="InParanoid" id="Q8IWY9"/>
<dbReference type="OMA" id="CVVKDAQ"/>
<dbReference type="OrthoDB" id="20982at2759"/>
<dbReference type="PAN-GO" id="Q8IWY9">
    <property type="GO annotations" value="2 GO annotations based on evolutionary models"/>
</dbReference>
<dbReference type="PhylomeDB" id="Q8IWY9"/>
<dbReference type="TreeFam" id="TF328405"/>
<dbReference type="PathwayCommons" id="Q8IWY9"/>
<dbReference type="SignaLink" id="Q8IWY9"/>
<dbReference type="BioGRID-ORCS" id="146059">
    <property type="hits" value="490 hits in 1178 CRISPR screens"/>
</dbReference>
<dbReference type="ChiTaRS" id="CDAN1">
    <property type="organism name" value="human"/>
</dbReference>
<dbReference type="GenomeRNAi" id="146059"/>
<dbReference type="Pharos" id="Q8IWY9">
    <property type="development level" value="Tbio"/>
</dbReference>
<dbReference type="PRO" id="PR:Q8IWY9"/>
<dbReference type="Proteomes" id="UP000005640">
    <property type="component" value="Chromosome 15"/>
</dbReference>
<dbReference type="RNAct" id="Q8IWY9">
    <property type="molecule type" value="protein"/>
</dbReference>
<dbReference type="Bgee" id="ENSG00000140326">
    <property type="expression patterns" value="Expressed in ventricular zone and 158 other cell types or tissues"/>
</dbReference>
<dbReference type="ExpressionAtlas" id="Q8IWY9">
    <property type="expression patterns" value="baseline and differential"/>
</dbReference>
<dbReference type="GO" id="GO:0005737">
    <property type="term" value="C:cytoplasm"/>
    <property type="evidence" value="ECO:0000314"/>
    <property type="project" value="UniProtKB"/>
</dbReference>
<dbReference type="GO" id="GO:0005829">
    <property type="term" value="C:cytosol"/>
    <property type="evidence" value="ECO:0000314"/>
    <property type="project" value="HPA"/>
</dbReference>
<dbReference type="GO" id="GO:0012505">
    <property type="term" value="C:endomembrane system"/>
    <property type="evidence" value="ECO:0000314"/>
    <property type="project" value="MGI"/>
</dbReference>
<dbReference type="GO" id="GO:0005634">
    <property type="term" value="C:nucleus"/>
    <property type="evidence" value="ECO:0000314"/>
    <property type="project" value="UniProtKB"/>
</dbReference>
<dbReference type="GO" id="GO:0005886">
    <property type="term" value="C:plasma membrane"/>
    <property type="evidence" value="ECO:0000314"/>
    <property type="project" value="HPA"/>
</dbReference>
<dbReference type="GO" id="GO:0006325">
    <property type="term" value="P:chromatin organization"/>
    <property type="evidence" value="ECO:0000315"/>
    <property type="project" value="MGI"/>
</dbReference>
<dbReference type="GO" id="GO:0051170">
    <property type="term" value="P:import into nucleus"/>
    <property type="evidence" value="ECO:0000315"/>
    <property type="project" value="GO_Central"/>
</dbReference>
<dbReference type="GO" id="GO:0008104">
    <property type="term" value="P:protein localization"/>
    <property type="evidence" value="ECO:0000315"/>
    <property type="project" value="MGI"/>
</dbReference>
<dbReference type="InterPro" id="IPR040031">
    <property type="entry name" value="Codanin-1"/>
</dbReference>
<dbReference type="InterPro" id="IPR028171">
    <property type="entry name" value="Codanin-1_C"/>
</dbReference>
<dbReference type="PANTHER" id="PTHR28678">
    <property type="entry name" value="CODANIN-1"/>
    <property type="match status" value="1"/>
</dbReference>
<dbReference type="PANTHER" id="PTHR28678:SF1">
    <property type="entry name" value="CODANIN-1"/>
    <property type="match status" value="1"/>
</dbReference>
<dbReference type="Pfam" id="PF15296">
    <property type="entry name" value="Codanin-1_C"/>
    <property type="match status" value="1"/>
</dbReference>
<feature type="initiator methionine" description="Removed" evidence="7">
    <location>
        <position position="1"/>
    </location>
</feature>
<feature type="chain" id="PRO_0000089439" description="Codanin-1">
    <location>
        <begin position="2"/>
        <end position="1227"/>
    </location>
</feature>
<feature type="transmembrane region" description="Helical" evidence="1">
    <location>
        <begin position="312"/>
        <end position="332"/>
    </location>
</feature>
<feature type="transmembrane region" description="Helical" evidence="1">
    <location>
        <begin position="626"/>
        <end position="646"/>
    </location>
</feature>
<feature type="region of interest" description="Disordered" evidence="2">
    <location>
        <begin position="63"/>
        <end position="294"/>
    </location>
</feature>
<feature type="region of interest" description="Interaction with ASF1A/B" evidence="4">
    <location>
        <begin position="188"/>
        <end position="208"/>
    </location>
</feature>
<feature type="compositionally biased region" description="Basic and acidic residues" evidence="2">
    <location>
        <begin position="128"/>
        <end position="137"/>
    </location>
</feature>
<feature type="compositionally biased region" description="Low complexity" evidence="2">
    <location>
        <begin position="155"/>
        <end position="167"/>
    </location>
</feature>
<feature type="compositionally biased region" description="Polar residues" evidence="2">
    <location>
        <begin position="214"/>
        <end position="232"/>
    </location>
</feature>
<feature type="compositionally biased region" description="Basic and acidic residues" evidence="2">
    <location>
        <begin position="247"/>
        <end position="260"/>
    </location>
</feature>
<feature type="modified residue" description="N-acetylalanine" evidence="7">
    <location>
        <position position="2"/>
    </location>
</feature>
<feature type="modified residue" description="Phosphothreonine" evidence="8">
    <location>
        <position position="71"/>
    </location>
</feature>
<feature type="modified residue" description="Phosphoserine" evidence="8">
    <location>
        <position position="265"/>
    </location>
</feature>
<feature type="modified residue" description="Phosphoserine" evidence="8">
    <location>
        <position position="285"/>
    </location>
</feature>
<feature type="splice variant" id="VSP_027097" description="In isoform 1." evidence="5">
    <original>G</original>
    <variation>GETQLSCRRWVPRRLWGVSHSSSALRSGAPGCR</variation>
    <location>
        <position position="190"/>
    </location>
</feature>
<feature type="splice variant" id="VSP_027098" description="In isoform 1." evidence="5">
    <location>
        <begin position="226"/>
        <end position="258"/>
    </location>
</feature>
<feature type="sequence variant" id="VAR_059602" description="In dbSNP:rs4265781.">
    <original>Q</original>
    <variation>L</variation>
    <location>
        <position position="107"/>
    </location>
</feature>
<feature type="sequence variant" id="VAR_056785" description="In dbSNP:rs12917189.">
    <original>Q</original>
    <variation>R</variation>
    <location>
        <position position="596"/>
    </location>
</feature>
<feature type="sequence variant" id="VAR_017218" description="In CDAN1A; dbSNP:rs120074166." evidence="3">
    <original>N</original>
    <variation>S</variation>
    <location>
        <position position="599"/>
    </location>
</feature>
<feature type="sequence variant" id="VAR_017219" description="In CDAN1A; dbSNP:rs120074167." evidence="3">
    <original>P</original>
    <variation>L</variation>
    <location>
        <position position="672"/>
    </location>
</feature>
<feature type="sequence variant" id="VAR_017220" description="In CDAN1A." evidence="3">
    <original>E</original>
    <variation>K</variation>
    <location>
        <position position="698"/>
    </location>
</feature>
<feature type="sequence variant" id="VAR_017221" description="In CDAN1A; partially disrupts ASF1 binding and loss the ability to arrest cells in S phase and inhibit DNA synthesis; dbSNP:rs80338696." evidence="3 4">
    <original>R</original>
    <variation>W</variation>
    <location>
        <position position="714"/>
    </location>
</feature>
<feature type="sequence variant" id="VAR_017222" description="In CDAN1A; dbSNP:rs120074168." evidence="3">
    <original>F</original>
    <variation>I</variation>
    <location>
        <position position="868"/>
    </location>
</feature>
<feature type="sequence variant" id="VAR_017223" description="In CDAN1A; dbSNP:rs370895637." evidence="3">
    <original>V</original>
    <variation>M</variation>
    <location>
        <position position="869"/>
    </location>
</feature>
<feature type="sequence variant" id="VAR_056786" description="In dbSNP:rs8023524.">
    <original>R</original>
    <variation>C</variation>
    <location>
        <position position="891"/>
    </location>
</feature>
<feature type="sequence variant" id="VAR_017224" description="In CDAN1A; partially disrupts ASF1 binding; dbSNP:rs80338697." evidence="3 4">
    <original>R</original>
    <variation>W</variation>
    <location>
        <position position="1042"/>
    </location>
</feature>
<feature type="sequence variant" id="VAR_017225" description="In CDAN1A; dbSNP:rs80338698." evidence="3">
    <original>D</original>
    <variation>V</variation>
    <location>
        <position position="1043"/>
    </location>
</feature>
<feature type="sequence variant" id="VAR_017226" description="In CDAN1A; dbSNP:rs80338699." evidence="3">
    <original>P</original>
    <variation>L</variation>
    <location>
        <position position="1130"/>
    </location>
</feature>
<feature type="sequence conflict" description="In Ref. 1; AAO14994." evidence="6" ref="1">
    <original>DN</original>
    <variation>VT</variation>
    <location>
        <begin position="31"/>
        <end position="32"/>
    </location>
</feature>
<feature type="sequence conflict" description="In Ref. 1; AAO14994." evidence="6" ref="1">
    <original>L</original>
    <variation>V</variation>
    <location>
        <position position="39"/>
    </location>
</feature>
<feature type="sequence conflict" description="In Ref. 1; AAO14994." evidence="6" ref="1">
    <original>LRAL</original>
    <variation>FGAW</variation>
    <location>
        <begin position="42"/>
        <end position="45"/>
    </location>
</feature>
<feature type="sequence conflict" description="In Ref. 1; AAO14994." evidence="6" ref="1">
    <original>PF</original>
    <variation>RS</variation>
    <location>
        <begin position="51"/>
        <end position="52"/>
    </location>
</feature>
<feature type="sequence conflict" description="In Ref. 1; AAO14994." evidence="6" ref="1">
    <original>N</original>
    <variation>T</variation>
    <location>
        <position position="55"/>
    </location>
</feature>
<feature type="sequence conflict" description="In Ref. 1; AAO14994." evidence="6" ref="1">
    <original>A</original>
    <variation>P</variation>
    <location>
        <position position="73"/>
    </location>
</feature>
<feature type="sequence conflict" description="In Ref. 1; AAO14994." evidence="6" ref="1">
    <original>P</original>
    <variation>R</variation>
    <location>
        <position position="76"/>
    </location>
</feature>
<feature type="sequence conflict" description="In Ref. 1; AAO14994." evidence="6" ref="1">
    <original>L</original>
    <variation>C</variation>
    <location>
        <position position="82"/>
    </location>
</feature>
<feature type="sequence conflict" description="In Ref. 1; AAO14994." evidence="6" ref="1">
    <original>S</original>
    <variation>T</variation>
    <location>
        <position position="93"/>
    </location>
</feature>
<feature type="sequence conflict" description="In Ref. 1; AAO14994." evidence="6" ref="1">
    <original>V</original>
    <variation>F</variation>
    <location>
        <position position="380"/>
    </location>
</feature>
<feature type="sequence conflict" description="In Ref. 3; AAH52568/AAH66640." evidence="6" ref="3">
    <original>S</original>
    <variation>F</variation>
    <location>
        <position position="421"/>
    </location>
</feature>
<feature type="sequence conflict" description="In Ref. 4; AAQ88832." evidence="6" ref="4">
    <original>Q</original>
    <variation>P</variation>
    <location>
        <position position="669"/>
    </location>
</feature>
<feature type="sequence conflict" description="In Ref. 1; AAO14994." evidence="6" ref="1">
    <original>S</original>
    <variation>C</variation>
    <location>
        <position position="726"/>
    </location>
</feature>
<feature type="sequence conflict" description="In Ref. 3; AAH01092/AAH08333/AAH08334." evidence="6" ref="3">
    <original>R</original>
    <variation>W</variation>
    <location>
        <position position="946"/>
    </location>
</feature>
<name>CDAN1_HUMAN</name>
<reference key="1">
    <citation type="journal article" date="2002" name="Am. J. Hum. Genet.">
        <title>Congenital dyserythropoietic anemia type I is caused by mutations in codanin-1.</title>
        <authorList>
            <person name="Dgany O."/>
            <person name="Avidan N."/>
            <person name="Delaunay J."/>
            <person name="Krasnov T."/>
            <person name="Shalmon L."/>
            <person name="Shalev H."/>
            <person name="Eidelitz-Markus T."/>
            <person name="Kapelushnik J."/>
            <person name="Cattan D."/>
            <person name="Pariente A."/>
            <person name="Tulliez M."/>
            <person name="Cretien A."/>
            <person name="Schischmanoff P.-O."/>
            <person name="Iolascon A."/>
            <person name="Fibach E."/>
            <person name="Koren A."/>
            <person name="Roessler J."/>
            <person name="Le Merrer M."/>
            <person name="Yaniv I."/>
            <person name="Zaizov R."/>
            <person name="Ben-Asher E."/>
            <person name="Olender T."/>
            <person name="Lancet D."/>
            <person name="Beckmann J.S."/>
            <person name="Tamary H."/>
        </authorList>
    </citation>
    <scope>NUCLEOTIDE SEQUENCE [MRNA] (ISOFORMS 1 AND 3)</scope>
    <scope>TISSUE SPECIFICITY</scope>
    <scope>VARIANTS CDAN1A SER-599; LEU-672; LYS-698; TRP-714; ILE-868; MET-869; TRP-1042; VAL-1043 AND LEU-1130</scope>
</reference>
<reference key="2">
    <citation type="journal article" date="2006" name="Nature">
        <title>Analysis of the DNA sequence and duplication history of human chromosome 15.</title>
        <authorList>
            <person name="Zody M.C."/>
            <person name="Garber M."/>
            <person name="Sharpe T."/>
            <person name="Young S.K."/>
            <person name="Rowen L."/>
            <person name="O'Neill K."/>
            <person name="Whittaker C.A."/>
            <person name="Kamal M."/>
            <person name="Chang J.L."/>
            <person name="Cuomo C.A."/>
            <person name="Dewar K."/>
            <person name="FitzGerald M.G."/>
            <person name="Kodira C.D."/>
            <person name="Madan A."/>
            <person name="Qin S."/>
            <person name="Yang X."/>
            <person name="Abbasi N."/>
            <person name="Abouelleil A."/>
            <person name="Arachchi H.M."/>
            <person name="Baradarani L."/>
            <person name="Birditt B."/>
            <person name="Bloom S."/>
            <person name="Bloom T."/>
            <person name="Borowsky M.L."/>
            <person name="Burke J."/>
            <person name="Butler J."/>
            <person name="Cook A."/>
            <person name="DeArellano K."/>
            <person name="DeCaprio D."/>
            <person name="Dorris L. III"/>
            <person name="Dors M."/>
            <person name="Eichler E.E."/>
            <person name="Engels R."/>
            <person name="Fahey J."/>
            <person name="Fleetwood P."/>
            <person name="Friedman C."/>
            <person name="Gearin G."/>
            <person name="Hall J.L."/>
            <person name="Hensley G."/>
            <person name="Johnson E."/>
            <person name="Jones C."/>
            <person name="Kamat A."/>
            <person name="Kaur A."/>
            <person name="Locke D.P."/>
            <person name="Madan A."/>
            <person name="Munson G."/>
            <person name="Jaffe D.B."/>
            <person name="Lui A."/>
            <person name="Macdonald P."/>
            <person name="Mauceli E."/>
            <person name="Naylor J.W."/>
            <person name="Nesbitt R."/>
            <person name="Nicol R."/>
            <person name="O'Leary S.B."/>
            <person name="Ratcliffe A."/>
            <person name="Rounsley S."/>
            <person name="She X."/>
            <person name="Sneddon K.M.B."/>
            <person name="Stewart S."/>
            <person name="Sougnez C."/>
            <person name="Stone S.M."/>
            <person name="Topham K."/>
            <person name="Vincent D."/>
            <person name="Wang S."/>
            <person name="Zimmer A.R."/>
            <person name="Birren B.W."/>
            <person name="Hood L."/>
            <person name="Lander E.S."/>
            <person name="Nusbaum C."/>
        </authorList>
    </citation>
    <scope>NUCLEOTIDE SEQUENCE [LARGE SCALE GENOMIC DNA]</scope>
</reference>
<reference key="3">
    <citation type="journal article" date="2004" name="Genome Res.">
        <title>The status, quality, and expansion of the NIH full-length cDNA project: the Mammalian Gene Collection (MGC).</title>
        <authorList>
            <consortium name="The MGC Project Team"/>
        </authorList>
    </citation>
    <scope>NUCLEOTIDE SEQUENCE [LARGE SCALE MRNA] (ISOFORM 2)</scope>
    <source>
        <tissue>Kidney</tissue>
        <tissue>Ovary</tissue>
    </source>
</reference>
<reference key="4">
    <citation type="journal article" date="2003" name="Genome Res.">
        <title>The secreted protein discovery initiative (SPDI), a large-scale effort to identify novel human secreted and transmembrane proteins: a bioinformatics assessment.</title>
        <authorList>
            <person name="Clark H.F."/>
            <person name="Gurney A.L."/>
            <person name="Abaya E."/>
            <person name="Baker K."/>
            <person name="Baldwin D.T."/>
            <person name="Brush J."/>
            <person name="Chen J."/>
            <person name="Chow B."/>
            <person name="Chui C."/>
            <person name="Crowley C."/>
            <person name="Currell B."/>
            <person name="Deuel B."/>
            <person name="Dowd P."/>
            <person name="Eaton D."/>
            <person name="Foster J.S."/>
            <person name="Grimaldi C."/>
            <person name="Gu Q."/>
            <person name="Hass P.E."/>
            <person name="Heldens S."/>
            <person name="Huang A."/>
            <person name="Kim H.S."/>
            <person name="Klimowski L."/>
            <person name="Jin Y."/>
            <person name="Johnson S."/>
            <person name="Lee J."/>
            <person name="Lewis L."/>
            <person name="Liao D."/>
            <person name="Mark M.R."/>
            <person name="Robbie E."/>
            <person name="Sanchez C."/>
            <person name="Schoenfeld J."/>
            <person name="Seshagiri S."/>
            <person name="Simmons L."/>
            <person name="Singh J."/>
            <person name="Smith V."/>
            <person name="Stinson J."/>
            <person name="Vagts A."/>
            <person name="Vandlen R.L."/>
            <person name="Watanabe C."/>
            <person name="Wieand D."/>
            <person name="Woods K."/>
            <person name="Xie M.-H."/>
            <person name="Yansura D.G."/>
            <person name="Yi S."/>
            <person name="Yu G."/>
            <person name="Yuan J."/>
            <person name="Zhang M."/>
            <person name="Zhang Z."/>
            <person name="Goddard A.D."/>
            <person name="Wood W.I."/>
            <person name="Godowski P.J."/>
            <person name="Gray A.M."/>
        </authorList>
    </citation>
    <scope>NUCLEOTIDE SEQUENCE [LARGE SCALE MRNA] OF 669-1016 (ISOFORM 2)</scope>
</reference>
<reference key="5">
    <citation type="journal article" date="2011" name="Blood">
        <title>Codanin-1 mutations in congenital dyserythropoietic anemia type 1 affect HP1-alpha localization in erythroblasts.</title>
        <authorList>
            <person name="Renella R."/>
            <person name="Roberts N.A."/>
            <person name="Brown J.M."/>
            <person name="De Gobbi M."/>
            <person name="Bird L.E."/>
            <person name="Hassanali T."/>
            <person name="Sharpe J.A."/>
            <person name="Sloane-Stanley J."/>
            <person name="Ferguson D.J."/>
            <person name="Cordell J."/>
            <person name="Buckle V.J."/>
            <person name="Higgs D.R."/>
            <person name="Wood W.G."/>
        </authorList>
    </citation>
    <scope>SUBCELLULAR LOCATION</scope>
</reference>
<reference key="6">
    <citation type="journal article" date="2012" name="EMBO J.">
        <title>Codanin-1, mutated in the anaemic disease CDAI, regulates Asf1 function in S-phase histone supply.</title>
        <authorList>
            <person name="Ask K."/>
            <person name="Jasencakova Z."/>
            <person name="Menard P."/>
            <person name="Feng Y."/>
            <person name="Almouzni G."/>
            <person name="Groth A."/>
        </authorList>
    </citation>
    <scope>SUBCELLULAR LOCATION</scope>
    <scope>FUNCTION</scope>
    <scope>INTERACTION WITH ASF1A AND ASF1B</scope>
    <scope>IDENTIFICATION IN A COMPLEX WITH ASF1A; ASF1B; IPO4; HISTONES H3.2 AND H4</scope>
    <scope>CHARACTERIZATION OF VARIANTS TRP-714 AND TRP-1042</scope>
    <scope>IDENTIFICATION BY MASS SPECTROMETRY</scope>
</reference>
<reference key="7">
    <citation type="journal article" date="2012" name="Mol. Cell. Proteomics">
        <title>Comparative large-scale characterisation of plant vs. mammal proteins reveals similar and idiosyncratic N-alpha acetylation features.</title>
        <authorList>
            <person name="Bienvenut W.V."/>
            <person name="Sumpton D."/>
            <person name="Martinez A."/>
            <person name="Lilla S."/>
            <person name="Espagne C."/>
            <person name="Meinnel T."/>
            <person name="Giglione C."/>
        </authorList>
    </citation>
    <scope>ACETYLATION [LARGE SCALE ANALYSIS] AT ALA-2</scope>
    <scope>CLEAVAGE OF INITIATOR METHIONINE [LARGE SCALE ANALYSIS]</scope>
    <scope>IDENTIFICATION BY MASS SPECTROMETRY [LARGE SCALE ANALYSIS]</scope>
</reference>
<reference key="8">
    <citation type="journal article" date="2013" name="J. Proteome Res.">
        <title>Toward a comprehensive characterization of a human cancer cell phosphoproteome.</title>
        <authorList>
            <person name="Zhou H."/>
            <person name="Di Palma S."/>
            <person name="Preisinger C."/>
            <person name="Peng M."/>
            <person name="Polat A.N."/>
            <person name="Heck A.J."/>
            <person name="Mohammed S."/>
        </authorList>
    </citation>
    <scope>PHOSPHORYLATION [LARGE SCALE ANALYSIS] AT THR-71; SER-265 AND SER-285</scope>
    <scope>IDENTIFICATION BY MASS SPECTROMETRY [LARGE SCALE ANALYSIS]</scope>
    <source>
        <tissue>Cervix carcinoma</tissue>
        <tissue>Erythroleukemia</tissue>
    </source>
</reference>
<protein>
    <recommendedName>
        <fullName>Codanin-1</fullName>
    </recommendedName>
</protein>
<accession>Q8IWY9</accession>
<accession>Q6NYD0</accession>
<accession>Q7Z7L5</accession>
<accession>Q969N3</accession>
<keyword id="KW-0007">Acetylation</keyword>
<keyword id="KW-0025">Alternative splicing</keyword>
<keyword id="KW-1055">Congenital dyserythropoietic anemia</keyword>
<keyword id="KW-0963">Cytoplasm</keyword>
<keyword id="KW-0225">Disease variant</keyword>
<keyword id="KW-0360">Hereditary hemolytic anemia</keyword>
<keyword id="KW-0472">Membrane</keyword>
<keyword id="KW-0539">Nucleus</keyword>
<keyword id="KW-0597">Phosphoprotein</keyword>
<keyword id="KW-1267">Proteomics identification</keyword>
<keyword id="KW-1185">Reference proteome</keyword>
<keyword id="KW-0812">Transmembrane</keyword>
<keyword id="KW-1133">Transmembrane helix</keyword>